<evidence type="ECO:0000255" key="1">
    <source>
        <dbReference type="HAMAP-Rule" id="MF_00624"/>
    </source>
</evidence>
<reference key="1">
    <citation type="journal article" date="2010" name="PLoS ONE">
        <title>Genome sequence of Cronobacter sakazakii BAA-894 and comparative genomic hybridization analysis with other Cronobacter species.</title>
        <authorList>
            <person name="Kucerova E."/>
            <person name="Clifton S.W."/>
            <person name="Xia X.Q."/>
            <person name="Long F."/>
            <person name="Porwollik S."/>
            <person name="Fulton L."/>
            <person name="Fronick C."/>
            <person name="Minx P."/>
            <person name="Kyung K."/>
            <person name="Warren W."/>
            <person name="Fulton R."/>
            <person name="Feng D."/>
            <person name="Wollam A."/>
            <person name="Shah N."/>
            <person name="Bhonagiri V."/>
            <person name="Nash W.E."/>
            <person name="Hallsworth-Pepin K."/>
            <person name="Wilson R.K."/>
            <person name="McClelland M."/>
            <person name="Forsythe S.J."/>
        </authorList>
    </citation>
    <scope>NUCLEOTIDE SEQUENCE [LARGE SCALE GENOMIC DNA]</scope>
    <source>
        <strain>ATCC BAA-894</strain>
    </source>
</reference>
<proteinExistence type="inferred from homology"/>
<gene>
    <name evidence="1" type="primary">glgC</name>
    <name type="ordered locus">ESA_04311</name>
</gene>
<sequence>MVRLEKKDPLMLARQLPLKSVALILAGGRGTRLKDLTATRAKPAVHFGGKFRIIDFALSNCINSGIRRIGVITQYQSHTLVQHIQRGWSFFSEEMNEFVDLLPAQQRVHGETWYRGTADAVTQNLDIIRRYKAEYVVILAGDHIYKQDYSRMLIDHVEKGARCTVACLPVPVAEARAFGVMAVDENSKVIDFVEKPANPPSMPCDDTKALASMGIYIFDADYLYELLEEDDENESSSHDFGKDIIPKVTYSGEAYAHPFPLSCVQSDPNAEPYWRDVGTLEAYWKANLDLASVTPELDMYDQDWPIRTHMESLPPAKFVQDRSGSHGMTLNSLVSGGCIISGSVVVQSVLFPRVRVNSFCNIDSAVLLPDVWVGRSCRLRRCIIDRACVIPEGMVIGENAEEDARRFYRSEEGIVLVTRDMLARLSA</sequence>
<organism>
    <name type="scientific">Cronobacter sakazakii (strain ATCC BAA-894)</name>
    <name type="common">Enterobacter sakazakii</name>
    <dbReference type="NCBI Taxonomy" id="290339"/>
    <lineage>
        <taxon>Bacteria</taxon>
        <taxon>Pseudomonadati</taxon>
        <taxon>Pseudomonadota</taxon>
        <taxon>Gammaproteobacteria</taxon>
        <taxon>Enterobacterales</taxon>
        <taxon>Enterobacteriaceae</taxon>
        <taxon>Cronobacter</taxon>
    </lineage>
</organism>
<accession>A7MGF4</accession>
<feature type="chain" id="PRO_1000051564" description="Glucose-1-phosphate adenylyltransferase">
    <location>
        <begin position="1"/>
        <end position="427"/>
    </location>
</feature>
<feature type="binding site" evidence="1">
    <location>
        <position position="40"/>
    </location>
    <ligand>
        <name>AMP</name>
        <dbReference type="ChEBI" id="CHEBI:456215"/>
    </ligand>
</feature>
<feature type="binding site" evidence="1">
    <location>
        <position position="46"/>
    </location>
    <ligand>
        <name>AMP</name>
        <dbReference type="ChEBI" id="CHEBI:456215"/>
    </ligand>
</feature>
<feature type="binding site" evidence="1">
    <location>
        <position position="52"/>
    </location>
    <ligand>
        <name>AMP</name>
        <dbReference type="ChEBI" id="CHEBI:456215"/>
    </ligand>
</feature>
<feature type="binding site" evidence="1">
    <location>
        <position position="114"/>
    </location>
    <ligand>
        <name>alpha-D-glucose 1-phosphate</name>
        <dbReference type="ChEBI" id="CHEBI:58601"/>
    </ligand>
</feature>
<feature type="binding site" evidence="1">
    <location>
        <position position="130"/>
    </location>
    <ligand>
        <name>AMP</name>
        <dbReference type="ChEBI" id="CHEBI:456215"/>
    </ligand>
</feature>
<feature type="binding site" evidence="1">
    <location>
        <position position="179"/>
    </location>
    <ligand>
        <name>alpha-D-glucose 1-phosphate</name>
        <dbReference type="ChEBI" id="CHEBI:58601"/>
    </ligand>
</feature>
<feature type="binding site" evidence="1">
    <location>
        <begin position="194"/>
        <end position="195"/>
    </location>
    <ligand>
        <name>alpha-D-glucose 1-phosphate</name>
        <dbReference type="ChEBI" id="CHEBI:58601"/>
    </ligand>
</feature>
<feature type="binding site" evidence="1">
    <location>
        <position position="212"/>
    </location>
    <ligand>
        <name>alpha-D-glucose 1-phosphate</name>
        <dbReference type="ChEBI" id="CHEBI:58601"/>
    </ligand>
</feature>
<feature type="binding site" evidence="1">
    <location>
        <position position="386"/>
    </location>
    <ligand>
        <name>AMP</name>
        <dbReference type="ChEBI" id="CHEBI:456215"/>
    </ligand>
</feature>
<feature type="site" description="Could play a key role in the communication between the regulatory and the substrate sites" evidence="1">
    <location>
        <position position="74"/>
    </location>
</feature>
<feature type="site" description="Could play a key role in the communication between the regulatory and the substrate sites" evidence="1">
    <location>
        <position position="113"/>
    </location>
</feature>
<protein>
    <recommendedName>
        <fullName evidence="1">Glucose-1-phosphate adenylyltransferase</fullName>
        <ecNumber evidence="1">2.7.7.27</ecNumber>
    </recommendedName>
    <alternativeName>
        <fullName evidence="1">ADP-glucose pyrophosphorylase</fullName>
        <shortName evidence="1">ADPGlc PPase</shortName>
    </alternativeName>
    <alternativeName>
        <fullName evidence="1">ADP-glucose synthase</fullName>
    </alternativeName>
</protein>
<dbReference type="EC" id="2.7.7.27" evidence="1"/>
<dbReference type="EMBL" id="CP000783">
    <property type="protein sequence ID" value="ABU79490.1"/>
    <property type="molecule type" value="Genomic_DNA"/>
</dbReference>
<dbReference type="RefSeq" id="WP_012126371.1">
    <property type="nucleotide sequence ID" value="NC_009778.1"/>
</dbReference>
<dbReference type="SMR" id="A7MGF4"/>
<dbReference type="KEGG" id="esa:ESA_04311"/>
<dbReference type="PATRIC" id="fig|290339.8.peg.3838"/>
<dbReference type="HOGENOM" id="CLU_029499_14_1_6"/>
<dbReference type="UniPathway" id="UPA00164"/>
<dbReference type="Proteomes" id="UP000000260">
    <property type="component" value="Chromosome"/>
</dbReference>
<dbReference type="GO" id="GO:0005524">
    <property type="term" value="F:ATP binding"/>
    <property type="evidence" value="ECO:0007669"/>
    <property type="project" value="UniProtKB-KW"/>
</dbReference>
<dbReference type="GO" id="GO:0008878">
    <property type="term" value="F:glucose-1-phosphate adenylyltransferase activity"/>
    <property type="evidence" value="ECO:0007669"/>
    <property type="project" value="UniProtKB-UniRule"/>
</dbReference>
<dbReference type="GO" id="GO:0005978">
    <property type="term" value="P:glycogen biosynthetic process"/>
    <property type="evidence" value="ECO:0007669"/>
    <property type="project" value="UniProtKB-UniRule"/>
</dbReference>
<dbReference type="CDD" id="cd02508">
    <property type="entry name" value="ADP_Glucose_PP"/>
    <property type="match status" value="1"/>
</dbReference>
<dbReference type="CDD" id="cd04651">
    <property type="entry name" value="LbH_G1P_AT_C"/>
    <property type="match status" value="1"/>
</dbReference>
<dbReference type="FunFam" id="3.90.550.10:FF:000014">
    <property type="entry name" value="Glucose-1-phosphate adenylyltransferase"/>
    <property type="match status" value="1"/>
</dbReference>
<dbReference type="Gene3D" id="2.160.10.10">
    <property type="entry name" value="Hexapeptide repeat proteins"/>
    <property type="match status" value="1"/>
</dbReference>
<dbReference type="Gene3D" id="3.90.550.10">
    <property type="entry name" value="Spore Coat Polysaccharide Biosynthesis Protein SpsA, Chain A"/>
    <property type="match status" value="1"/>
</dbReference>
<dbReference type="HAMAP" id="MF_00624">
    <property type="entry name" value="GlgC"/>
    <property type="match status" value="1"/>
</dbReference>
<dbReference type="InterPro" id="IPR011831">
    <property type="entry name" value="ADP-Glc_PPase"/>
</dbReference>
<dbReference type="InterPro" id="IPR005836">
    <property type="entry name" value="ADP_Glu_pyroP_CS"/>
</dbReference>
<dbReference type="InterPro" id="IPR023049">
    <property type="entry name" value="GlgC_bac"/>
</dbReference>
<dbReference type="InterPro" id="IPR056818">
    <property type="entry name" value="GlmU/GlgC-like_hexapep"/>
</dbReference>
<dbReference type="InterPro" id="IPR005835">
    <property type="entry name" value="NTP_transferase_dom"/>
</dbReference>
<dbReference type="InterPro" id="IPR029044">
    <property type="entry name" value="Nucleotide-diphossugar_trans"/>
</dbReference>
<dbReference type="InterPro" id="IPR011004">
    <property type="entry name" value="Trimer_LpxA-like_sf"/>
</dbReference>
<dbReference type="NCBIfam" id="TIGR02091">
    <property type="entry name" value="glgC"/>
    <property type="match status" value="1"/>
</dbReference>
<dbReference type="NCBIfam" id="NF001947">
    <property type="entry name" value="PRK00725.1"/>
    <property type="match status" value="1"/>
</dbReference>
<dbReference type="NCBIfam" id="NF002023">
    <property type="entry name" value="PRK00844.1"/>
    <property type="match status" value="1"/>
</dbReference>
<dbReference type="PANTHER" id="PTHR43523:SF2">
    <property type="entry name" value="GLUCOSE-1-PHOSPHATE ADENYLYLTRANSFERASE"/>
    <property type="match status" value="1"/>
</dbReference>
<dbReference type="PANTHER" id="PTHR43523">
    <property type="entry name" value="GLUCOSE-1-PHOSPHATE ADENYLYLTRANSFERASE-RELATED"/>
    <property type="match status" value="1"/>
</dbReference>
<dbReference type="Pfam" id="PF24894">
    <property type="entry name" value="Hexapep_GlmU"/>
    <property type="match status" value="1"/>
</dbReference>
<dbReference type="Pfam" id="PF00483">
    <property type="entry name" value="NTP_transferase"/>
    <property type="match status" value="1"/>
</dbReference>
<dbReference type="SUPFAM" id="SSF53448">
    <property type="entry name" value="Nucleotide-diphospho-sugar transferases"/>
    <property type="match status" value="1"/>
</dbReference>
<dbReference type="SUPFAM" id="SSF51161">
    <property type="entry name" value="Trimeric LpxA-like enzymes"/>
    <property type="match status" value="1"/>
</dbReference>
<dbReference type="PROSITE" id="PS00808">
    <property type="entry name" value="ADP_GLC_PYROPHOSPH_1"/>
    <property type="match status" value="1"/>
</dbReference>
<dbReference type="PROSITE" id="PS00809">
    <property type="entry name" value="ADP_GLC_PYROPHOSPH_2"/>
    <property type="match status" value="1"/>
</dbReference>
<dbReference type="PROSITE" id="PS00810">
    <property type="entry name" value="ADP_GLC_PYROPHOSPH_3"/>
    <property type="match status" value="1"/>
</dbReference>
<name>GLGC_CROS8</name>
<comment type="function">
    <text evidence="1">Involved in the biosynthesis of ADP-glucose, a building block required for the elongation reactions to produce glycogen. Catalyzes the reaction between ATP and alpha-D-glucose 1-phosphate (G1P) to produce pyrophosphate and ADP-Glc.</text>
</comment>
<comment type="catalytic activity">
    <reaction evidence="1">
        <text>alpha-D-glucose 1-phosphate + ATP + H(+) = ADP-alpha-D-glucose + diphosphate</text>
        <dbReference type="Rhea" id="RHEA:12120"/>
        <dbReference type="ChEBI" id="CHEBI:15378"/>
        <dbReference type="ChEBI" id="CHEBI:30616"/>
        <dbReference type="ChEBI" id="CHEBI:33019"/>
        <dbReference type="ChEBI" id="CHEBI:57498"/>
        <dbReference type="ChEBI" id="CHEBI:58601"/>
        <dbReference type="EC" id="2.7.7.27"/>
    </reaction>
</comment>
<comment type="activity regulation">
    <text evidence="1">Allosterically activated by fructose-1,6-bisphosphate (F16BP) and inhibited by AMP.</text>
</comment>
<comment type="pathway">
    <text evidence="1">Glycan biosynthesis; glycogen biosynthesis.</text>
</comment>
<comment type="subunit">
    <text evidence="1">Homotetramer.</text>
</comment>
<comment type="similarity">
    <text evidence="1">Belongs to the bacterial/plant glucose-1-phosphate adenylyltransferase family.</text>
</comment>
<keyword id="KW-0021">Allosteric enzyme</keyword>
<keyword id="KW-0067">ATP-binding</keyword>
<keyword id="KW-0119">Carbohydrate metabolism</keyword>
<keyword id="KW-0320">Glycogen biosynthesis</keyword>
<keyword id="KW-0321">Glycogen metabolism</keyword>
<keyword id="KW-0547">Nucleotide-binding</keyword>
<keyword id="KW-0548">Nucleotidyltransferase</keyword>
<keyword id="KW-1185">Reference proteome</keyword>
<keyword id="KW-0808">Transferase</keyword>